<sequence>MVKEITDATFEQETSEGLVLTDFWATWCGPCRMVAPVLEEIQEERGEALKIVKMDVDENPETPGSFGVMSIPTLLIKKDGEVVETIIGYRPKEELDEVINKYV</sequence>
<organism>
    <name type="scientific">Listeria monocytogenes serovar 1/2a (strain ATCC BAA-679 / EGD-e)</name>
    <dbReference type="NCBI Taxonomy" id="169963"/>
    <lineage>
        <taxon>Bacteria</taxon>
        <taxon>Bacillati</taxon>
        <taxon>Bacillota</taxon>
        <taxon>Bacilli</taxon>
        <taxon>Bacillales</taxon>
        <taxon>Listeriaceae</taxon>
        <taxon>Listeria</taxon>
    </lineage>
</organism>
<gene>
    <name type="primary">trxA</name>
    <name type="ordered locus">lmo1233</name>
</gene>
<evidence type="ECO:0000250" key="1"/>
<evidence type="ECO:0000255" key="2">
    <source>
        <dbReference type="PROSITE-ProRule" id="PRU00691"/>
    </source>
</evidence>
<evidence type="ECO:0000305" key="3"/>
<comment type="function">
    <text evidence="1">Component of the thioredoxin-thioredoxin reductase system. Participates in various redox reactions through the reversible oxidation of its active center dithiol to a disulfide and catalyzes dithiol-disulfide exchange reactions (By similarity).</text>
</comment>
<comment type="similarity">
    <text evidence="3">Belongs to the thioredoxin family.</text>
</comment>
<protein>
    <recommendedName>
        <fullName>Thioredoxin</fullName>
        <shortName>Trx</shortName>
    </recommendedName>
</protein>
<keyword id="KW-1015">Disulfide bond</keyword>
<keyword id="KW-0249">Electron transport</keyword>
<keyword id="KW-0560">Oxidoreductase</keyword>
<keyword id="KW-0676">Redox-active center</keyword>
<keyword id="KW-1185">Reference proteome</keyword>
<keyword id="KW-0813">Transport</keyword>
<feature type="chain" id="PRO_0000120111" description="Thioredoxin">
    <location>
        <begin position="1"/>
        <end position="103"/>
    </location>
</feature>
<feature type="domain" description="Thioredoxin" evidence="2">
    <location>
        <begin position="1"/>
        <end position="103"/>
    </location>
</feature>
<feature type="disulfide bond" description="Redox-active" evidence="2">
    <location>
        <begin position="28"/>
        <end position="31"/>
    </location>
</feature>
<proteinExistence type="inferred from homology"/>
<dbReference type="EMBL" id="AJ133006">
    <property type="protein sequence ID" value="CAB40815.2"/>
    <property type="molecule type" value="Genomic_DNA"/>
</dbReference>
<dbReference type="EMBL" id="AL591978">
    <property type="protein sequence ID" value="CAC99311.1"/>
    <property type="molecule type" value="Genomic_DNA"/>
</dbReference>
<dbReference type="PIR" id="AI1228">
    <property type="entry name" value="AI1228"/>
</dbReference>
<dbReference type="RefSeq" id="NP_464758.1">
    <property type="nucleotide sequence ID" value="NC_003210.1"/>
</dbReference>
<dbReference type="RefSeq" id="WP_003723853.1">
    <property type="nucleotide sequence ID" value="NZ_CP149495.1"/>
</dbReference>
<dbReference type="SMR" id="P0A4L3"/>
<dbReference type="STRING" id="169963.gene:17593889"/>
<dbReference type="PaxDb" id="169963-lmo1233"/>
<dbReference type="EnsemblBacteria" id="CAC99311">
    <property type="protein sequence ID" value="CAC99311"/>
    <property type="gene ID" value="CAC99311"/>
</dbReference>
<dbReference type="GeneID" id="93234644"/>
<dbReference type="GeneID" id="986032"/>
<dbReference type="KEGG" id="lmo:lmo1233"/>
<dbReference type="PATRIC" id="fig|169963.11.peg.1264"/>
<dbReference type="eggNOG" id="COG3118">
    <property type="taxonomic scope" value="Bacteria"/>
</dbReference>
<dbReference type="HOGENOM" id="CLU_090389_10_4_9"/>
<dbReference type="OrthoDB" id="9790390at2"/>
<dbReference type="PhylomeDB" id="P0A4L3"/>
<dbReference type="BioCyc" id="LMON169963:LMO1233-MONOMER"/>
<dbReference type="PHI-base" id="PHI:7258"/>
<dbReference type="Proteomes" id="UP000000817">
    <property type="component" value="Chromosome"/>
</dbReference>
<dbReference type="GO" id="GO:0005737">
    <property type="term" value="C:cytoplasm"/>
    <property type="evidence" value="ECO:0000318"/>
    <property type="project" value="GO_Central"/>
</dbReference>
<dbReference type="GO" id="GO:0005829">
    <property type="term" value="C:cytosol"/>
    <property type="evidence" value="ECO:0000318"/>
    <property type="project" value="GO_Central"/>
</dbReference>
<dbReference type="GO" id="GO:0015035">
    <property type="term" value="F:protein-disulfide reductase activity"/>
    <property type="evidence" value="ECO:0000318"/>
    <property type="project" value="GO_Central"/>
</dbReference>
<dbReference type="GO" id="GO:0045454">
    <property type="term" value="P:cell redox homeostasis"/>
    <property type="evidence" value="ECO:0000318"/>
    <property type="project" value="GO_Central"/>
</dbReference>
<dbReference type="CDD" id="cd02947">
    <property type="entry name" value="TRX_family"/>
    <property type="match status" value="1"/>
</dbReference>
<dbReference type="FunFam" id="3.40.30.10:FF:000001">
    <property type="entry name" value="Thioredoxin"/>
    <property type="match status" value="1"/>
</dbReference>
<dbReference type="Gene3D" id="3.40.30.10">
    <property type="entry name" value="Glutaredoxin"/>
    <property type="match status" value="1"/>
</dbReference>
<dbReference type="InterPro" id="IPR005746">
    <property type="entry name" value="Thioredoxin"/>
</dbReference>
<dbReference type="InterPro" id="IPR036249">
    <property type="entry name" value="Thioredoxin-like_sf"/>
</dbReference>
<dbReference type="InterPro" id="IPR017937">
    <property type="entry name" value="Thioredoxin_CS"/>
</dbReference>
<dbReference type="InterPro" id="IPR013766">
    <property type="entry name" value="Thioredoxin_domain"/>
</dbReference>
<dbReference type="NCBIfam" id="TIGR01068">
    <property type="entry name" value="thioredoxin"/>
    <property type="match status" value="1"/>
</dbReference>
<dbReference type="PANTHER" id="PTHR45663">
    <property type="entry name" value="GEO12009P1"/>
    <property type="match status" value="1"/>
</dbReference>
<dbReference type="PANTHER" id="PTHR45663:SF11">
    <property type="entry name" value="GEO12009P1"/>
    <property type="match status" value="1"/>
</dbReference>
<dbReference type="Pfam" id="PF00085">
    <property type="entry name" value="Thioredoxin"/>
    <property type="match status" value="1"/>
</dbReference>
<dbReference type="PIRSF" id="PIRSF000077">
    <property type="entry name" value="Thioredoxin"/>
    <property type="match status" value="1"/>
</dbReference>
<dbReference type="PRINTS" id="PR00421">
    <property type="entry name" value="THIOREDOXIN"/>
</dbReference>
<dbReference type="SUPFAM" id="SSF52833">
    <property type="entry name" value="Thioredoxin-like"/>
    <property type="match status" value="1"/>
</dbReference>
<dbReference type="PROSITE" id="PS00194">
    <property type="entry name" value="THIOREDOXIN_1"/>
    <property type="match status" value="1"/>
</dbReference>
<dbReference type="PROSITE" id="PS51352">
    <property type="entry name" value="THIOREDOXIN_2"/>
    <property type="match status" value="1"/>
</dbReference>
<accession>P0A4L3</accession>
<accession>Q9S386</accession>
<name>THIO_LISMO</name>
<reference key="1">
    <citation type="submission" date="1999-04" db="EMBL/GenBank/DDBJ databases">
        <title>Isolation, cloning and characterization of the Listeria monocytogenes thioredoxin gene, trxA.</title>
        <authorList>
            <person name="Tarchanov M."/>
            <person name="Borovok I."/>
            <person name="Aharonowitz Y."/>
            <person name="Cohen G."/>
        </authorList>
    </citation>
    <scope>NUCLEOTIDE SEQUENCE [GENOMIC DNA]</scope>
    <source>
        <strain>EGD / Serovar 1/2a</strain>
    </source>
</reference>
<reference key="2">
    <citation type="journal article" date="2001" name="Science">
        <title>Comparative genomics of Listeria species.</title>
        <authorList>
            <person name="Glaser P."/>
            <person name="Frangeul L."/>
            <person name="Buchrieser C."/>
            <person name="Rusniok C."/>
            <person name="Amend A."/>
            <person name="Baquero F."/>
            <person name="Berche P."/>
            <person name="Bloecker H."/>
            <person name="Brandt P."/>
            <person name="Chakraborty T."/>
            <person name="Charbit A."/>
            <person name="Chetouani F."/>
            <person name="Couve E."/>
            <person name="de Daruvar A."/>
            <person name="Dehoux P."/>
            <person name="Domann E."/>
            <person name="Dominguez-Bernal G."/>
            <person name="Duchaud E."/>
            <person name="Durant L."/>
            <person name="Dussurget O."/>
            <person name="Entian K.-D."/>
            <person name="Fsihi H."/>
            <person name="Garcia-del Portillo F."/>
            <person name="Garrido P."/>
            <person name="Gautier L."/>
            <person name="Goebel W."/>
            <person name="Gomez-Lopez N."/>
            <person name="Hain T."/>
            <person name="Hauf J."/>
            <person name="Jackson D."/>
            <person name="Jones L.-M."/>
            <person name="Kaerst U."/>
            <person name="Kreft J."/>
            <person name="Kuhn M."/>
            <person name="Kunst F."/>
            <person name="Kurapkat G."/>
            <person name="Madueno E."/>
            <person name="Maitournam A."/>
            <person name="Mata Vicente J."/>
            <person name="Ng E."/>
            <person name="Nedjari H."/>
            <person name="Nordsiek G."/>
            <person name="Novella S."/>
            <person name="de Pablos B."/>
            <person name="Perez-Diaz J.-C."/>
            <person name="Purcell R."/>
            <person name="Remmel B."/>
            <person name="Rose M."/>
            <person name="Schlueter T."/>
            <person name="Simoes N."/>
            <person name="Tierrez A."/>
            <person name="Vazquez-Boland J.-A."/>
            <person name="Voss H."/>
            <person name="Wehland J."/>
            <person name="Cossart P."/>
        </authorList>
    </citation>
    <scope>NUCLEOTIDE SEQUENCE [LARGE SCALE GENOMIC DNA]</scope>
    <source>
        <strain>ATCC BAA-679 / EGD-e</strain>
    </source>
</reference>